<name>C519A_DICDI</name>
<accession>Q554S4</accession>
<accession>Q8SSU3</accession>
<dbReference type="EC" id="1.14.-.-"/>
<dbReference type="EMBL" id="AAFI02000012">
    <property type="protein sequence ID" value="EAL70204.1"/>
    <property type="molecule type" value="Genomic_DNA"/>
</dbReference>
<dbReference type="RefSeq" id="XP_644249.1">
    <property type="nucleotide sequence ID" value="XM_639157.1"/>
</dbReference>
<dbReference type="SMR" id="Q554S4"/>
<dbReference type="FunCoup" id="Q554S4">
    <property type="interactions" value="4"/>
</dbReference>
<dbReference type="STRING" id="44689.Q554S4"/>
<dbReference type="PaxDb" id="44689-DDB0233019"/>
<dbReference type="EnsemblProtists" id="EAL70204">
    <property type="protein sequence ID" value="EAL70204"/>
    <property type="gene ID" value="DDB_G0274623"/>
</dbReference>
<dbReference type="GeneID" id="8619677"/>
<dbReference type="KEGG" id="ddi:DDB_G0274623"/>
<dbReference type="dictyBase" id="DDB_G0274623">
    <property type="gene designation" value="cyp519A1"/>
</dbReference>
<dbReference type="VEuPathDB" id="AmoebaDB:DDB_G0274623"/>
<dbReference type="eggNOG" id="KOG0156">
    <property type="taxonomic scope" value="Eukaryota"/>
</dbReference>
<dbReference type="HOGENOM" id="CLU_001570_4_0_1"/>
<dbReference type="InParanoid" id="Q554S4"/>
<dbReference type="OMA" id="GPQEAME"/>
<dbReference type="PhylomeDB" id="Q554S4"/>
<dbReference type="Reactome" id="R-DDI-193993">
    <property type="pathway name" value="Mineralocorticoid biosynthesis"/>
</dbReference>
<dbReference type="Reactome" id="R-DDI-194002">
    <property type="pathway name" value="Glucocorticoid biosynthesis"/>
</dbReference>
<dbReference type="Reactome" id="R-DDI-211976">
    <property type="pathway name" value="Endogenous sterols"/>
</dbReference>
<dbReference type="PRO" id="PR:Q554S4"/>
<dbReference type="Proteomes" id="UP000002195">
    <property type="component" value="Chromosome 2"/>
</dbReference>
<dbReference type="GO" id="GO:0016020">
    <property type="term" value="C:membrane"/>
    <property type="evidence" value="ECO:0007669"/>
    <property type="project" value="UniProtKB-SubCell"/>
</dbReference>
<dbReference type="GO" id="GO:0020037">
    <property type="term" value="F:heme binding"/>
    <property type="evidence" value="ECO:0007669"/>
    <property type="project" value="InterPro"/>
</dbReference>
<dbReference type="GO" id="GO:0005506">
    <property type="term" value="F:iron ion binding"/>
    <property type="evidence" value="ECO:0007669"/>
    <property type="project" value="InterPro"/>
</dbReference>
<dbReference type="GO" id="GO:0004497">
    <property type="term" value="F:monooxygenase activity"/>
    <property type="evidence" value="ECO:0007669"/>
    <property type="project" value="UniProtKB-KW"/>
</dbReference>
<dbReference type="GO" id="GO:0016705">
    <property type="term" value="F:oxidoreductase activity, acting on paired donors, with incorporation or reduction of molecular oxygen"/>
    <property type="evidence" value="ECO:0007669"/>
    <property type="project" value="InterPro"/>
</dbReference>
<dbReference type="CDD" id="cd20617">
    <property type="entry name" value="CYP1_2-like"/>
    <property type="match status" value="1"/>
</dbReference>
<dbReference type="Gene3D" id="1.10.630.10">
    <property type="entry name" value="Cytochrome P450"/>
    <property type="match status" value="1"/>
</dbReference>
<dbReference type="InterPro" id="IPR001128">
    <property type="entry name" value="Cyt_P450"/>
</dbReference>
<dbReference type="InterPro" id="IPR002401">
    <property type="entry name" value="Cyt_P450_E_grp-I"/>
</dbReference>
<dbReference type="InterPro" id="IPR036396">
    <property type="entry name" value="Cyt_P450_sf"/>
</dbReference>
<dbReference type="PANTHER" id="PTHR24303:SF31">
    <property type="entry name" value="CYTOCHROME P450 307A1-RELATED"/>
    <property type="match status" value="1"/>
</dbReference>
<dbReference type="PANTHER" id="PTHR24303">
    <property type="entry name" value="HEME-BINDING MONOOXYGENASE FAMILY"/>
    <property type="match status" value="1"/>
</dbReference>
<dbReference type="Pfam" id="PF00067">
    <property type="entry name" value="p450"/>
    <property type="match status" value="2"/>
</dbReference>
<dbReference type="PRINTS" id="PR00463">
    <property type="entry name" value="EP450I"/>
</dbReference>
<dbReference type="PRINTS" id="PR00385">
    <property type="entry name" value="P450"/>
</dbReference>
<dbReference type="SUPFAM" id="SSF48264">
    <property type="entry name" value="Cytochrome P450"/>
    <property type="match status" value="1"/>
</dbReference>
<comment type="cofactor">
    <cofactor evidence="1">
        <name>heme</name>
        <dbReference type="ChEBI" id="CHEBI:30413"/>
    </cofactor>
</comment>
<comment type="subcellular location">
    <subcellularLocation>
        <location evidence="3">Membrane</location>
        <topology evidence="3">Single-pass membrane protein</topology>
    </subcellularLocation>
</comment>
<comment type="similarity">
    <text evidence="3">Belongs to the cytochrome P450 family.</text>
</comment>
<feature type="chain" id="PRO_0000318832" description="Probable cytochrome P450 519A1">
    <location>
        <begin position="1"/>
        <end position="530"/>
    </location>
</feature>
<feature type="transmembrane region" description="Helical" evidence="2">
    <location>
        <begin position="1"/>
        <end position="21"/>
    </location>
</feature>
<feature type="binding site" description="axial binding residue" evidence="1">
    <location>
        <position position="476"/>
    </location>
    <ligand>
        <name>heme</name>
        <dbReference type="ChEBI" id="CHEBI:30413"/>
    </ligand>
    <ligandPart>
        <name>Fe</name>
        <dbReference type="ChEBI" id="CHEBI:18248"/>
    </ligandPart>
</feature>
<sequence>MESIINLIFYIIIFLILIDFLKKNISFRKNEPPRGGVAFPIFGDLPKLGENPHRYLTNLAMKKGGIYSVWLGDEKVFILTDPEAVRDAWVKQFRNFSDHPKTKSVRIFSGNFNDMAFAEYSQWKINSKWVSSAFTKTKLKTIGDLIEKESNYFIEHLKAYSNSGQPIFPKPYISKFGINVISGMMFSQVISKDESVDKGAMEKLTVPIQAVFKRLGADNLDDFISILQPVFYFQNEKFKRQVQEIYDYLEGIYNQHDTNLDTENPKDLMDLLIISTEGKERDMIIHIGMDCLLAGSDSTSATCEWFCLFMINNPDVQKKAYQELINALKDEDNKKFIPISKKDNCPYMLSIFKEVLRLRPVGVLGIPRVALEETTIMGYTIPKGSQIFQNVYGMSHLFVSDPYKFKPERWIEYKKQKDLLKEKEMQQLQEGADVVIDNKNNIKNNNSSNKPNSKTNSIFDDLDKVSIPYSVGNRKCPGASLSELALFSLCSNILLNFELKSIDGKPIDDTEVYGLTIHTKVHPISLTLRP</sequence>
<proteinExistence type="inferred from homology"/>
<evidence type="ECO:0000250" key="1"/>
<evidence type="ECO:0000255" key="2"/>
<evidence type="ECO:0000305" key="3"/>
<gene>
    <name type="primary">cyp519A1</name>
    <name type="ORF">DDB_G0274623</name>
</gene>
<protein>
    <recommendedName>
        <fullName>Probable cytochrome P450 519A1</fullName>
        <ecNumber>1.14.-.-</ecNumber>
    </recommendedName>
</protein>
<keyword id="KW-0349">Heme</keyword>
<keyword id="KW-0408">Iron</keyword>
<keyword id="KW-0472">Membrane</keyword>
<keyword id="KW-0479">Metal-binding</keyword>
<keyword id="KW-0503">Monooxygenase</keyword>
<keyword id="KW-0560">Oxidoreductase</keyword>
<keyword id="KW-1185">Reference proteome</keyword>
<keyword id="KW-0812">Transmembrane</keyword>
<keyword id="KW-1133">Transmembrane helix</keyword>
<reference key="1">
    <citation type="journal article" date="2002" name="Nature">
        <title>Sequence and analysis of chromosome 2 of Dictyostelium discoideum.</title>
        <authorList>
            <person name="Gloeckner G."/>
            <person name="Eichinger L."/>
            <person name="Szafranski K."/>
            <person name="Pachebat J.A."/>
            <person name="Bankier A.T."/>
            <person name="Dear P.H."/>
            <person name="Lehmann R."/>
            <person name="Baumgart C."/>
            <person name="Parra G."/>
            <person name="Abril J.F."/>
            <person name="Guigo R."/>
            <person name="Kumpf K."/>
            <person name="Tunggal B."/>
            <person name="Cox E.C."/>
            <person name="Quail M.A."/>
            <person name="Platzer M."/>
            <person name="Rosenthal A."/>
            <person name="Noegel A.A."/>
        </authorList>
    </citation>
    <scope>NUCLEOTIDE SEQUENCE [LARGE SCALE GENOMIC DNA]</scope>
    <source>
        <strain>AX4</strain>
    </source>
</reference>
<reference key="2">
    <citation type="journal article" date="2005" name="Nature">
        <title>The genome of the social amoeba Dictyostelium discoideum.</title>
        <authorList>
            <person name="Eichinger L."/>
            <person name="Pachebat J.A."/>
            <person name="Gloeckner G."/>
            <person name="Rajandream M.A."/>
            <person name="Sucgang R."/>
            <person name="Berriman M."/>
            <person name="Song J."/>
            <person name="Olsen R."/>
            <person name="Szafranski K."/>
            <person name="Xu Q."/>
            <person name="Tunggal B."/>
            <person name="Kummerfeld S."/>
            <person name="Madera M."/>
            <person name="Konfortov B.A."/>
            <person name="Rivero F."/>
            <person name="Bankier A.T."/>
            <person name="Lehmann R."/>
            <person name="Hamlin N."/>
            <person name="Davies R."/>
            <person name="Gaudet P."/>
            <person name="Fey P."/>
            <person name="Pilcher K."/>
            <person name="Chen G."/>
            <person name="Saunders D."/>
            <person name="Sodergren E.J."/>
            <person name="Davis P."/>
            <person name="Kerhornou A."/>
            <person name="Nie X."/>
            <person name="Hall N."/>
            <person name="Anjard C."/>
            <person name="Hemphill L."/>
            <person name="Bason N."/>
            <person name="Farbrother P."/>
            <person name="Desany B."/>
            <person name="Just E."/>
            <person name="Morio T."/>
            <person name="Rost R."/>
            <person name="Churcher C.M."/>
            <person name="Cooper J."/>
            <person name="Haydock S."/>
            <person name="van Driessche N."/>
            <person name="Cronin A."/>
            <person name="Goodhead I."/>
            <person name="Muzny D.M."/>
            <person name="Mourier T."/>
            <person name="Pain A."/>
            <person name="Lu M."/>
            <person name="Harper D."/>
            <person name="Lindsay R."/>
            <person name="Hauser H."/>
            <person name="James K.D."/>
            <person name="Quiles M."/>
            <person name="Madan Babu M."/>
            <person name="Saito T."/>
            <person name="Buchrieser C."/>
            <person name="Wardroper A."/>
            <person name="Felder M."/>
            <person name="Thangavelu M."/>
            <person name="Johnson D."/>
            <person name="Knights A."/>
            <person name="Loulseged H."/>
            <person name="Mungall K.L."/>
            <person name="Oliver K."/>
            <person name="Price C."/>
            <person name="Quail M.A."/>
            <person name="Urushihara H."/>
            <person name="Hernandez J."/>
            <person name="Rabbinowitsch E."/>
            <person name="Steffen D."/>
            <person name="Sanders M."/>
            <person name="Ma J."/>
            <person name="Kohara Y."/>
            <person name="Sharp S."/>
            <person name="Simmonds M.N."/>
            <person name="Spiegler S."/>
            <person name="Tivey A."/>
            <person name="Sugano S."/>
            <person name="White B."/>
            <person name="Walker D."/>
            <person name="Woodward J.R."/>
            <person name="Winckler T."/>
            <person name="Tanaka Y."/>
            <person name="Shaulsky G."/>
            <person name="Schleicher M."/>
            <person name="Weinstock G.M."/>
            <person name="Rosenthal A."/>
            <person name="Cox E.C."/>
            <person name="Chisholm R.L."/>
            <person name="Gibbs R.A."/>
            <person name="Loomis W.F."/>
            <person name="Platzer M."/>
            <person name="Kay R.R."/>
            <person name="Williams J.G."/>
            <person name="Dear P.H."/>
            <person name="Noegel A.A."/>
            <person name="Barrell B.G."/>
            <person name="Kuspa A."/>
        </authorList>
    </citation>
    <scope>NUCLEOTIDE SEQUENCE [LARGE SCALE GENOMIC DNA]</scope>
    <source>
        <strain>AX4</strain>
    </source>
</reference>
<organism>
    <name type="scientific">Dictyostelium discoideum</name>
    <name type="common">Social amoeba</name>
    <dbReference type="NCBI Taxonomy" id="44689"/>
    <lineage>
        <taxon>Eukaryota</taxon>
        <taxon>Amoebozoa</taxon>
        <taxon>Evosea</taxon>
        <taxon>Eumycetozoa</taxon>
        <taxon>Dictyostelia</taxon>
        <taxon>Dictyosteliales</taxon>
        <taxon>Dictyosteliaceae</taxon>
        <taxon>Dictyostelium</taxon>
    </lineage>
</organism>